<feature type="chain" id="PRO_0000263800" description="Translation initiation factor IF-1">
    <location>
        <begin position="1"/>
        <end position="72"/>
    </location>
</feature>
<feature type="domain" description="S1-like" evidence="1">
    <location>
        <begin position="1"/>
        <end position="72"/>
    </location>
</feature>
<organism>
    <name type="scientific">Escherichia coli O6:K15:H31 (strain 536 / UPEC)</name>
    <dbReference type="NCBI Taxonomy" id="362663"/>
    <lineage>
        <taxon>Bacteria</taxon>
        <taxon>Pseudomonadati</taxon>
        <taxon>Pseudomonadota</taxon>
        <taxon>Gammaproteobacteria</taxon>
        <taxon>Enterobacterales</taxon>
        <taxon>Enterobacteriaceae</taxon>
        <taxon>Escherichia</taxon>
    </lineage>
</organism>
<keyword id="KW-0963">Cytoplasm</keyword>
<keyword id="KW-0396">Initiation factor</keyword>
<keyword id="KW-0648">Protein biosynthesis</keyword>
<keyword id="KW-0694">RNA-binding</keyword>
<keyword id="KW-0699">rRNA-binding</keyword>
<proteinExistence type="inferred from homology"/>
<protein>
    <recommendedName>
        <fullName evidence="1">Translation initiation factor IF-1</fullName>
    </recommendedName>
</protein>
<gene>
    <name evidence="1" type="primary">infA</name>
    <name type="ordered locus">ECP_0898</name>
</gene>
<reference key="1">
    <citation type="journal article" date="2006" name="Mol. Microbiol.">
        <title>Role of pathogenicity island-associated integrases in the genome plasticity of uropathogenic Escherichia coli strain 536.</title>
        <authorList>
            <person name="Hochhut B."/>
            <person name="Wilde C."/>
            <person name="Balling G."/>
            <person name="Middendorf B."/>
            <person name="Dobrindt U."/>
            <person name="Brzuszkiewicz E."/>
            <person name="Gottschalk G."/>
            <person name="Carniel E."/>
            <person name="Hacker J."/>
        </authorList>
    </citation>
    <scope>NUCLEOTIDE SEQUENCE [LARGE SCALE GENOMIC DNA]</scope>
    <source>
        <strain>536 / UPEC</strain>
    </source>
</reference>
<accession>Q0TJG6</accession>
<name>IF1_ECOL5</name>
<sequence length="72" mass="8250">MAKEDNIEMQGTVLETLPNTMFRVELENGHVVTAHISGKMRKNYIRILTGDKVTVELTPYDLSKGRIVFRSR</sequence>
<comment type="function">
    <text evidence="1">One of the essential components for the initiation of protein synthesis. Stabilizes the binding of IF-2 and IF-3 on the 30S subunit to which N-formylmethionyl-tRNA(fMet) subsequently binds. Helps modulate mRNA selection, yielding the 30S pre-initiation complex (PIC). Upon addition of the 50S ribosomal subunit IF-1, IF-2 and IF-3 are released leaving the mature 70S translation initiation complex.</text>
</comment>
<comment type="subunit">
    <text evidence="1">Component of the 30S ribosomal translation pre-initiation complex which assembles on the 30S ribosome in the order IF-2 and IF-3, IF-1 and N-formylmethionyl-tRNA(fMet); mRNA recruitment can occur at any time during PIC assembly.</text>
</comment>
<comment type="subcellular location">
    <subcellularLocation>
        <location evidence="1">Cytoplasm</location>
    </subcellularLocation>
</comment>
<comment type="similarity">
    <text evidence="1">Belongs to the IF-1 family.</text>
</comment>
<dbReference type="EMBL" id="CP000247">
    <property type="protein sequence ID" value="ABG68913.1"/>
    <property type="molecule type" value="Genomic_DNA"/>
</dbReference>
<dbReference type="RefSeq" id="WP_001040187.1">
    <property type="nucleotide sequence ID" value="NC_008253.1"/>
</dbReference>
<dbReference type="SMR" id="Q0TJG6"/>
<dbReference type="GeneID" id="93776536"/>
<dbReference type="KEGG" id="ecp:ECP_0898"/>
<dbReference type="HOGENOM" id="CLU_151267_1_0_6"/>
<dbReference type="Proteomes" id="UP000009182">
    <property type="component" value="Chromosome"/>
</dbReference>
<dbReference type="GO" id="GO:0005829">
    <property type="term" value="C:cytosol"/>
    <property type="evidence" value="ECO:0007669"/>
    <property type="project" value="TreeGrafter"/>
</dbReference>
<dbReference type="GO" id="GO:0043022">
    <property type="term" value="F:ribosome binding"/>
    <property type="evidence" value="ECO:0007669"/>
    <property type="project" value="UniProtKB-UniRule"/>
</dbReference>
<dbReference type="GO" id="GO:0019843">
    <property type="term" value="F:rRNA binding"/>
    <property type="evidence" value="ECO:0007669"/>
    <property type="project" value="UniProtKB-UniRule"/>
</dbReference>
<dbReference type="GO" id="GO:0003743">
    <property type="term" value="F:translation initiation factor activity"/>
    <property type="evidence" value="ECO:0007669"/>
    <property type="project" value="UniProtKB-UniRule"/>
</dbReference>
<dbReference type="CDD" id="cd04451">
    <property type="entry name" value="S1_IF1"/>
    <property type="match status" value="1"/>
</dbReference>
<dbReference type="FunFam" id="2.40.50.140:FF:000002">
    <property type="entry name" value="Translation initiation factor IF-1"/>
    <property type="match status" value="1"/>
</dbReference>
<dbReference type="Gene3D" id="2.40.50.140">
    <property type="entry name" value="Nucleic acid-binding proteins"/>
    <property type="match status" value="1"/>
</dbReference>
<dbReference type="HAMAP" id="MF_00075">
    <property type="entry name" value="IF_1"/>
    <property type="match status" value="1"/>
</dbReference>
<dbReference type="InterPro" id="IPR012340">
    <property type="entry name" value="NA-bd_OB-fold"/>
</dbReference>
<dbReference type="InterPro" id="IPR006196">
    <property type="entry name" value="RNA-binding_domain_S1_IF1"/>
</dbReference>
<dbReference type="InterPro" id="IPR003029">
    <property type="entry name" value="S1_domain"/>
</dbReference>
<dbReference type="InterPro" id="IPR004368">
    <property type="entry name" value="TIF_IF1"/>
</dbReference>
<dbReference type="NCBIfam" id="TIGR00008">
    <property type="entry name" value="infA"/>
    <property type="match status" value="1"/>
</dbReference>
<dbReference type="PANTHER" id="PTHR33370">
    <property type="entry name" value="TRANSLATION INITIATION FACTOR IF-1, CHLOROPLASTIC"/>
    <property type="match status" value="1"/>
</dbReference>
<dbReference type="PANTHER" id="PTHR33370:SF1">
    <property type="entry name" value="TRANSLATION INITIATION FACTOR IF-1, CHLOROPLASTIC"/>
    <property type="match status" value="1"/>
</dbReference>
<dbReference type="Pfam" id="PF01176">
    <property type="entry name" value="eIF-1a"/>
    <property type="match status" value="1"/>
</dbReference>
<dbReference type="SMART" id="SM00316">
    <property type="entry name" value="S1"/>
    <property type="match status" value="1"/>
</dbReference>
<dbReference type="SUPFAM" id="SSF50249">
    <property type="entry name" value="Nucleic acid-binding proteins"/>
    <property type="match status" value="1"/>
</dbReference>
<dbReference type="PROSITE" id="PS50832">
    <property type="entry name" value="S1_IF1_TYPE"/>
    <property type="match status" value="1"/>
</dbReference>
<evidence type="ECO:0000255" key="1">
    <source>
        <dbReference type="HAMAP-Rule" id="MF_00075"/>
    </source>
</evidence>